<sequence>MPLHSVIVLVLVLCLGWKSNTQEESLSDFTICAEPGPVIPQGNFITIVCSTSGEYDTVRLEKEGSTFMEKKTEPHGKQHRFRIGPVNETITGYYNCIFEKNYVWSQRSNDLQLKVIKENVTQGLAPGPSMTSDTSWLKTYSIHILTVVSVIFLLCLSLFLFCFLSHRQKKQGLPNNKSQHQRSQERLNLATNGLEKTSDIVMDDSLSEDRQTETWTPVAGDLQEVTYAQLDHDSLTQRTVKDVTPQNRVIMAESSTYAAIMRC</sequence>
<comment type="function">
    <text evidence="1">Functions as an inhibitory receptor that plays a constitutive negative regulatory role on cytolytic function of natural killer (NK) cells, B-cells and T-cells. Activation by Tyr phosphorylation results in recruitment and activation of the phosphatases PTPN6 and PTPN11. It also reduces the increase of intracellular calcium evoked by B-cell receptor ligation. May also play its inhibitory role independently of SH2-containing phosphatases. Modulates cytokine production in CD4+ T-cells, down-regulating IL2 and IFNG production while inducing secretion of transforming growth factor beta. Also down-regulates IgG and IgE production in B-cells as well as IL8, IL10 and TNF secretion. Inhibits proliferation and induces apoptosis in myeloid leukemia cell lines as well as prevents nuclear translocation of NF-kappa-B p65 subunit/RELA and phosphorylation of I-kappa-B alpha/CHUK in these cells. Inhibits the differentiation of peripheral blood precursors towards dendritic cells (By similarity).</text>
</comment>
<comment type="subunit">
    <text evidence="1">Interacts with SH2 domains of tyrosine-protein phosphatases PTPN6 and PTPN11. The interaction with PTPN6 is constitutive. Interacts with the SH2 domain of CSK. Binds with high affinity to extracellular matrix collagens, the interaction is functionally important (By similarity).</text>
</comment>
<comment type="subcellular location">
    <subcellularLocation>
        <location evidence="5">Membrane</location>
        <topology evidence="5">Single-pass membrane protein</topology>
    </subcellularLocation>
</comment>
<comment type="tissue specificity">
    <text evidence="4">Expressed in lymphoid and non-lymphoid organs.</text>
</comment>
<comment type="domain">
    <text evidence="4">ITIM (immunoreceptor tyrosine-based inhibitor motif) motif is a cytoplasmic motif present in 2 copies in the intracellular part of LAIR1. When phosphorylated, ITIM motif can bind the SH2 domain of several SH2-containing phosphatases, leading to down-regulation of cell activation.</text>
</comment>
<comment type="PTM">
    <text evidence="1">Phosphorylation at Tyr-227 and Tyr-257 activates it. May be phosphorylated by LCK (By similarity).</text>
</comment>
<comment type="PTM">
    <text evidence="1">N-glycosylated.</text>
</comment>
<accession>P0C1X9</accession>
<keyword id="KW-1015">Disulfide bond</keyword>
<keyword id="KW-0325">Glycoprotein</keyword>
<keyword id="KW-0393">Immunoglobulin domain</keyword>
<keyword id="KW-0472">Membrane</keyword>
<keyword id="KW-0597">Phosphoprotein</keyword>
<keyword id="KW-0675">Receptor</keyword>
<keyword id="KW-1185">Reference proteome</keyword>
<keyword id="KW-0732">Signal</keyword>
<keyword id="KW-0812">Transmembrane</keyword>
<keyword id="KW-1133">Transmembrane helix</keyword>
<feature type="signal peptide" evidence="3">
    <location>
        <begin position="1"/>
        <end position="21"/>
    </location>
</feature>
<feature type="chain" id="PRO_0000250684" description="Leukocyte-associated immunoglobulin-like receptor 1">
    <location>
        <begin position="22"/>
        <end position="263"/>
    </location>
</feature>
<feature type="transmembrane region" description="Helical" evidence="3">
    <location>
        <begin position="144"/>
        <end position="164"/>
    </location>
</feature>
<feature type="domain" description="Ig-like C2-type">
    <location>
        <begin position="27"/>
        <end position="112"/>
    </location>
</feature>
<feature type="short sequence motif" description="ITIM motif 1">
    <location>
        <begin position="225"/>
        <end position="230"/>
    </location>
</feature>
<feature type="short sequence motif" description="ITIM motif 2">
    <location>
        <begin position="255"/>
        <end position="260"/>
    </location>
</feature>
<feature type="modified residue" description="Phosphotyrosine" evidence="2">
    <location>
        <position position="227"/>
    </location>
</feature>
<feature type="modified residue" description="Phosphotyrosine" evidence="2">
    <location>
        <position position="257"/>
    </location>
</feature>
<feature type="glycosylation site" description="N-linked (GlcNAc...) asparagine" evidence="3">
    <location>
        <position position="87"/>
    </location>
</feature>
<feature type="disulfide bond" evidence="1">
    <location>
        <begin position="49"/>
        <end position="96"/>
    </location>
</feature>
<name>LAIR1_RAT</name>
<evidence type="ECO:0000250" key="1"/>
<evidence type="ECO:0000250" key="2">
    <source>
        <dbReference type="UniProtKB" id="Q6GTX8"/>
    </source>
</evidence>
<evidence type="ECO:0000255" key="3"/>
<evidence type="ECO:0000269" key="4">
    <source>
    </source>
</evidence>
<evidence type="ECO:0000305" key="5"/>
<reference key="1">
    <citation type="journal article" date="2005" name="Immunogenetics">
        <title>Identification and characterization of the rat homologue of LAIR-1.</title>
        <authorList>
            <person name="Lebbink R.J."/>
            <person name="de Ruiter T."/>
            <person name="Kaptijn G.J.A."/>
            <person name="Meyaard L."/>
        </authorList>
    </citation>
    <scope>NUCLEOTIDE SEQUENCE [MRNA]</scope>
    <scope>DOMAIN ITIM MOTIF</scope>
    <scope>TISSUE SPECIFICITY</scope>
</reference>
<dbReference type="EMBL" id="AY863023">
    <property type="protein sequence ID" value="AAX55651.1"/>
    <property type="molecule type" value="mRNA"/>
</dbReference>
<dbReference type="RefSeq" id="NP_001025099.1">
    <property type="nucleotide sequence ID" value="NM_001029928.1"/>
</dbReference>
<dbReference type="RefSeq" id="XP_008757196.1">
    <property type="nucleotide sequence ID" value="XM_008758974.2"/>
</dbReference>
<dbReference type="RefSeq" id="XP_017445109.1">
    <property type="nucleotide sequence ID" value="XM_017589620.3"/>
</dbReference>
<dbReference type="RefSeq" id="XP_017445110.1">
    <property type="nucleotide sequence ID" value="XM_017589621.1"/>
</dbReference>
<dbReference type="RefSeq" id="XP_017445111.1">
    <property type="nucleotide sequence ID" value="XM_017589622.1"/>
</dbReference>
<dbReference type="RefSeq" id="XP_017445112.1">
    <property type="nucleotide sequence ID" value="XM_017589623.3"/>
</dbReference>
<dbReference type="SMR" id="P0C1X9"/>
<dbReference type="FunCoup" id="P0C1X9">
    <property type="interactions" value="70"/>
</dbReference>
<dbReference type="STRING" id="10116.ENSRNOP00000037815"/>
<dbReference type="GlyCosmos" id="P0C1X9">
    <property type="glycosylation" value="1 site, No reported glycans"/>
</dbReference>
<dbReference type="GlyGen" id="P0C1X9">
    <property type="glycosylation" value="1 site"/>
</dbReference>
<dbReference type="PhosphoSitePlus" id="P0C1X9"/>
<dbReference type="PaxDb" id="10116-ENSRNOP00000037815"/>
<dbReference type="Ensembl" id="ENSRNOT00000036413.5">
    <property type="protein sequence ID" value="ENSRNOP00000037815.4"/>
    <property type="gene ID" value="ENSRNOG00000027733.5"/>
</dbReference>
<dbReference type="GeneID" id="574531"/>
<dbReference type="KEGG" id="rno:574531"/>
<dbReference type="UCSC" id="RGD:1560048">
    <property type="organism name" value="rat"/>
</dbReference>
<dbReference type="AGR" id="RGD:1560048"/>
<dbReference type="CTD" id="3903"/>
<dbReference type="RGD" id="1560048">
    <property type="gene designation" value="Lair1"/>
</dbReference>
<dbReference type="eggNOG" id="ENOG502TBGD">
    <property type="taxonomic scope" value="Eukaryota"/>
</dbReference>
<dbReference type="GeneTree" id="ENSGT00940000162693"/>
<dbReference type="HOGENOM" id="CLU_021100_3_1_1"/>
<dbReference type="InParanoid" id="P0C1X9"/>
<dbReference type="OMA" id="CIYQIES"/>
<dbReference type="OrthoDB" id="9838250at2759"/>
<dbReference type="PhylomeDB" id="P0C1X9"/>
<dbReference type="TreeFam" id="TF336644"/>
<dbReference type="Reactome" id="R-RNO-198933">
    <property type="pathway name" value="Immunoregulatory interactions between a Lymphoid and a non-Lymphoid cell"/>
</dbReference>
<dbReference type="Reactome" id="R-RNO-6798695">
    <property type="pathway name" value="Neutrophil degranulation"/>
</dbReference>
<dbReference type="PRO" id="PR:P0C1X9"/>
<dbReference type="Proteomes" id="UP000002494">
    <property type="component" value="Chromosome 1"/>
</dbReference>
<dbReference type="Bgee" id="ENSRNOG00000027733">
    <property type="expression patterns" value="Expressed in spleen and 6 other cell types or tissues"/>
</dbReference>
<dbReference type="GO" id="GO:0005886">
    <property type="term" value="C:plasma membrane"/>
    <property type="evidence" value="ECO:0000318"/>
    <property type="project" value="GO_Central"/>
</dbReference>
<dbReference type="GO" id="GO:0002764">
    <property type="term" value="P:immune response-regulating signaling pathway"/>
    <property type="evidence" value="ECO:0000318"/>
    <property type="project" value="GO_Central"/>
</dbReference>
<dbReference type="FunFam" id="2.60.40.10:FF:000049">
    <property type="entry name" value="Leukocyte immunoglobulin-like receptor subfamily B member 1"/>
    <property type="match status" value="1"/>
</dbReference>
<dbReference type="Gene3D" id="2.60.40.10">
    <property type="entry name" value="Immunoglobulins"/>
    <property type="match status" value="1"/>
</dbReference>
<dbReference type="InterPro" id="IPR036179">
    <property type="entry name" value="Ig-like_dom_sf"/>
</dbReference>
<dbReference type="InterPro" id="IPR013783">
    <property type="entry name" value="Ig-like_fold"/>
</dbReference>
<dbReference type="InterPro" id="IPR050412">
    <property type="entry name" value="Ig-like_Receptors_ImmuneReg"/>
</dbReference>
<dbReference type="PANTHER" id="PTHR11738:SF129">
    <property type="entry name" value="LEUKOCYTE-ASSOCIATED IMMUNOGLOBULIN-LIKE RECEPTOR 1"/>
    <property type="match status" value="1"/>
</dbReference>
<dbReference type="PANTHER" id="PTHR11738">
    <property type="entry name" value="MHC CLASS I NK CELL RECEPTOR"/>
    <property type="match status" value="1"/>
</dbReference>
<dbReference type="SUPFAM" id="SSF48726">
    <property type="entry name" value="Immunoglobulin"/>
    <property type="match status" value="1"/>
</dbReference>
<proteinExistence type="evidence at transcript level"/>
<protein>
    <recommendedName>
        <fullName>Leukocyte-associated immunoglobulin-like receptor 1</fullName>
        <shortName>LAIR-1</shortName>
        <shortName>rLAIR1</shortName>
    </recommendedName>
    <cdAntigenName>CD305</cdAntigenName>
</protein>
<gene>
    <name type="primary">Lair1</name>
</gene>
<organism>
    <name type="scientific">Rattus norvegicus</name>
    <name type="common">Rat</name>
    <dbReference type="NCBI Taxonomy" id="10116"/>
    <lineage>
        <taxon>Eukaryota</taxon>
        <taxon>Metazoa</taxon>
        <taxon>Chordata</taxon>
        <taxon>Craniata</taxon>
        <taxon>Vertebrata</taxon>
        <taxon>Euteleostomi</taxon>
        <taxon>Mammalia</taxon>
        <taxon>Eutheria</taxon>
        <taxon>Euarchontoglires</taxon>
        <taxon>Glires</taxon>
        <taxon>Rodentia</taxon>
        <taxon>Myomorpha</taxon>
        <taxon>Muroidea</taxon>
        <taxon>Muridae</taxon>
        <taxon>Murinae</taxon>
        <taxon>Rattus</taxon>
    </lineage>
</organism>